<organismHost>
    <name type="scientific">Macaca mulatta</name>
    <name type="common">Rhesus macaque</name>
    <dbReference type="NCBI Taxonomy" id="9544"/>
</organismHost>
<evidence type="ECO:0000250" key="1"/>
<evidence type="ECO:0000255" key="2"/>
<evidence type="ECO:0000255" key="3">
    <source>
        <dbReference type="HAMAP-Rule" id="MF_04032"/>
    </source>
</evidence>
<feature type="signal peptide" evidence="3">
    <location>
        <begin position="1"/>
        <end position="30"/>
    </location>
</feature>
<feature type="chain" id="PRO_0000038196" description="Envelope glycoprotein B" evidence="3">
    <location>
        <begin position="31"/>
        <end position="854"/>
    </location>
</feature>
<feature type="topological domain" description="Virion surface" evidence="3">
    <location>
        <begin position="31"/>
        <end position="723"/>
    </location>
</feature>
<feature type="transmembrane region" description="Helical" evidence="3">
    <location>
        <begin position="724"/>
        <end position="744"/>
    </location>
</feature>
<feature type="topological domain" description="Intravirion" evidence="3">
    <location>
        <begin position="745"/>
        <end position="854"/>
    </location>
</feature>
<feature type="region of interest" description="Involved in fusion and/or binding to host membrane" evidence="3">
    <location>
        <begin position="127"/>
        <end position="133"/>
    </location>
</feature>
<feature type="region of interest" description="Involved in fusion and/or binding to host membrane" evidence="3">
    <location>
        <begin position="212"/>
        <end position="219"/>
    </location>
</feature>
<feature type="region of interest" description="Hydrophobic membrane proximal region" evidence="3">
    <location>
        <begin position="669"/>
        <end position="721"/>
    </location>
</feature>
<feature type="region of interest" description="Hydrophobic membrane proximal region">
    <location>
        <begin position="700"/>
        <end position="720"/>
    </location>
</feature>
<feature type="site" description="Cleavage; by host furin" evidence="2">
    <location>
        <begin position="433"/>
        <end position="434"/>
    </location>
</feature>
<feature type="glycosylation site" description="N-linked (GlcNAc...) asparagine; by host" evidence="3">
    <location>
        <position position="40"/>
    </location>
</feature>
<feature type="glycosylation site" description="N-linked (GlcNAc...) asparagine; by host" evidence="3">
    <location>
        <position position="48"/>
    </location>
</feature>
<feature type="glycosylation site" description="N-linked (GlcNAc...) asparagine; by host" evidence="3">
    <location>
        <position position="60"/>
    </location>
</feature>
<feature type="glycosylation site" description="N-linked (GlcNAc...) asparagine; by host" evidence="3">
    <location>
        <position position="183"/>
    </location>
</feature>
<feature type="glycosylation site" description="N-linked (GlcNAc...) asparagine; by host" evidence="3">
    <location>
        <position position="256"/>
    </location>
</feature>
<feature type="glycosylation site" description="N-linked (GlcNAc...) asparagine; by host" evidence="3">
    <location>
        <position position="275"/>
    </location>
</feature>
<feature type="glycosylation site" description="N-linked (GlcNAc...) asparagine; by host" evidence="3">
    <location>
        <position position="314"/>
    </location>
</feature>
<feature type="glycosylation site" description="N-linked (GlcNAc...) asparagine; by host" evidence="3">
    <location>
        <position position="356"/>
    </location>
</feature>
<feature type="glycosylation site" description="N-linked (GlcNAc...) asparagine; by host" evidence="3">
    <location>
        <position position="378"/>
    </location>
</feature>
<feature type="glycosylation site" description="N-linked (GlcNAc...) asparagine; by host" evidence="3">
    <location>
        <position position="382"/>
    </location>
</feature>
<feature type="glycosylation site" description="N-linked (GlcNAc...) asparagine; by host" evidence="3">
    <location>
        <position position="390"/>
    </location>
</feature>
<feature type="glycosylation site" description="N-linked (GlcNAc...) asparagine; by host" evidence="3">
    <location>
        <position position="423"/>
    </location>
</feature>
<feature type="glycosylation site" description="N-linked (GlcNAc...) asparagine; by host" evidence="3">
    <location>
        <position position="426"/>
    </location>
</feature>
<feature type="glycosylation site" description="N-linked (GlcNAc...) asparagine; by host" evidence="3">
    <location>
        <position position="442"/>
    </location>
</feature>
<feature type="glycosylation site" description="N-linked (GlcNAc...) asparagine; by host" evidence="3">
    <location>
        <position position="558"/>
    </location>
</feature>
<feature type="glycosylation site" description="N-linked (GlcNAc...) asparagine; by host" evidence="3">
    <location>
        <position position="595"/>
    </location>
</feature>
<feature type="disulfide bond" evidence="3">
    <location>
        <begin position="69"/>
        <end position="524"/>
    </location>
</feature>
<feature type="disulfide bond" evidence="3">
    <location>
        <begin position="86"/>
        <end position="480"/>
    </location>
</feature>
<feature type="disulfide bond" evidence="3">
    <location>
        <begin position="160"/>
        <end position="225"/>
    </location>
</feature>
<feature type="disulfide bond" evidence="3">
    <location>
        <begin position="317"/>
        <end position="364"/>
    </location>
</feature>
<feature type="disulfide bond" evidence="3">
    <location>
        <begin position="546"/>
        <end position="583"/>
    </location>
</feature>
<protein>
    <recommendedName>
        <fullName evidence="3">Envelope glycoprotein B</fullName>
        <shortName evidence="3">gB</shortName>
    </recommendedName>
</protein>
<sequence length="854" mass="97826">MSKNWFPLLCASVLVVYVSIASSSTGTASGAVTPTSPTENTTGPLIENTTLRTHEVFKINMSKFPYRVCSMAQGTDLLRFEQNINCDSFKPTKEDFEEGIMVVYKRDIRPYTFKVHMYQKILTFRQSYSFIRENHLLGFSQEHLAVPMWEVHYINKLNRCYNSVVRNVAGATYVNYHRDSYVNETMLLVEDDFSNTHSSRFVTVKELWHKPGSTWLYTTSCNVNCMVTVTTARSKYPYDFFVTSDGKVVDISPFYNGSNNKHFGENRDKFSVRKNYSMIAYYGRDNAPEVAHPLVGFFERPDVLMSWDIVEEANNTCEYTFWEQSERTIRSEADDTYHYTSSSMTATFLTSKEELNESDPSFQCIKDKANEQLQLIFNTSYNETYVQSGNVSMYETTGGLIVFWLPVKEKSILEMEELAVAYNNTNSSTRRKRSTDSASDSNKTSEEVLKSIVYAQLQYTYDTLRNYINRALRQIAEAWCKDQKRTLEVFKELSKINPSAMLSAIYDKPIAARFVGDVISLAKCVEVDQNSVKVLRDMRTKESGVCYSRPVVLYTFKNSSHVQYGQLGEYNEILLGRHRTEACEYPSLKIYIAGNSSYEYVDYLYKRMIPLDSISTVDTMISLDIDPLENTDFKALELYSEDELRSSNVFDLEDIMREFNTYKQRMIHVEGKVFDKVPGYLRGLDDMMSGLGSAGKALGVAIGAVGGAVASFVEGVVGFIKNPFGSFTVILFLLAVLGVIYLIYMRQKRAYEKPFEHFFPYVVPPTTVKEAPPSYEQSQYENIKEKAASATKEFSLEEAYQMLLALQKLDQEKRRKAEADDEDFASNGQSAGFLDRLRNRRRGGYQKIQNEYEV</sequence>
<proteinExistence type="inferred from homology"/>
<dbReference type="EMBL" id="U76749">
    <property type="protein sequence ID" value="AAB70024.1"/>
    <property type="molecule type" value="Genomic_DNA"/>
</dbReference>
<dbReference type="SMR" id="P89053"/>
<dbReference type="TCDB" id="1.G.22.1.2">
    <property type="family name" value="the cytomegalovirus (human herpesvirus 5) glycoprotein go (go) family"/>
</dbReference>
<dbReference type="GlyCosmos" id="P89053">
    <property type="glycosylation" value="16 sites, No reported glycans"/>
</dbReference>
<dbReference type="GO" id="GO:0044175">
    <property type="term" value="C:host cell endosome membrane"/>
    <property type="evidence" value="ECO:0007669"/>
    <property type="project" value="UniProtKB-SubCell"/>
</dbReference>
<dbReference type="GO" id="GO:0044178">
    <property type="term" value="C:host cell Golgi membrane"/>
    <property type="evidence" value="ECO:0007669"/>
    <property type="project" value="UniProtKB-SubCell"/>
</dbReference>
<dbReference type="GO" id="GO:0020002">
    <property type="term" value="C:host cell plasma membrane"/>
    <property type="evidence" value="ECO:0007669"/>
    <property type="project" value="UniProtKB-SubCell"/>
</dbReference>
<dbReference type="GO" id="GO:0016020">
    <property type="term" value="C:membrane"/>
    <property type="evidence" value="ECO:0007669"/>
    <property type="project" value="UniProtKB-KW"/>
</dbReference>
<dbReference type="GO" id="GO:0019031">
    <property type="term" value="C:viral envelope"/>
    <property type="evidence" value="ECO:0007669"/>
    <property type="project" value="UniProtKB-KW"/>
</dbReference>
<dbReference type="GO" id="GO:0055036">
    <property type="term" value="C:virion membrane"/>
    <property type="evidence" value="ECO:0007669"/>
    <property type="project" value="UniProtKB-SubCell"/>
</dbReference>
<dbReference type="GO" id="GO:0046718">
    <property type="term" value="P:symbiont entry into host cell"/>
    <property type="evidence" value="ECO:0007669"/>
    <property type="project" value="UniProtKB-KW"/>
</dbReference>
<dbReference type="GO" id="GO:0019062">
    <property type="term" value="P:virion attachment to host cell"/>
    <property type="evidence" value="ECO:0007669"/>
    <property type="project" value="UniProtKB-KW"/>
</dbReference>
<dbReference type="Gene3D" id="1.20.5.1890">
    <property type="match status" value="1"/>
</dbReference>
<dbReference type="Gene3D" id="2.30.29.100">
    <property type="match status" value="2"/>
</dbReference>
<dbReference type="Gene3D" id="2.30.30.1230">
    <property type="match status" value="1"/>
</dbReference>
<dbReference type="Gene3D" id="6.10.250.3280">
    <property type="match status" value="1"/>
</dbReference>
<dbReference type="HAMAP" id="MF_04032">
    <property type="entry name" value="HSV_GB"/>
    <property type="match status" value="1"/>
</dbReference>
<dbReference type="InterPro" id="IPR035377">
    <property type="entry name" value="Glycoprot_B_PH1"/>
</dbReference>
<dbReference type="InterPro" id="IPR035381">
    <property type="entry name" value="Glycoprot_B_PH2"/>
</dbReference>
<dbReference type="InterPro" id="IPR038631">
    <property type="entry name" value="Glycoprot_B_PH2_sf"/>
</dbReference>
<dbReference type="InterPro" id="IPR055341">
    <property type="entry name" value="Glycoprotein_B_ecto_C"/>
</dbReference>
<dbReference type="InterPro" id="IPR000234">
    <property type="entry name" value="Herpes_Glycoprot_B"/>
</dbReference>
<dbReference type="Pfam" id="PF17416">
    <property type="entry name" value="Glycoprot_B_PH1"/>
    <property type="match status" value="1"/>
</dbReference>
<dbReference type="Pfam" id="PF17417">
    <property type="entry name" value="Glycoprot_B_PH2"/>
    <property type="match status" value="1"/>
</dbReference>
<dbReference type="Pfam" id="PF00606">
    <property type="entry name" value="Glycoprotein_B"/>
    <property type="match status" value="1"/>
</dbReference>
<dbReference type="SUPFAM" id="SSF161008">
    <property type="entry name" value="Viral glycoprotein ectodomain-like"/>
    <property type="match status" value="1"/>
</dbReference>
<keyword id="KW-1015">Disulfide bond</keyword>
<keyword id="KW-0325">Glycoprotein</keyword>
<keyword id="KW-1032">Host cell membrane</keyword>
<keyword id="KW-1039">Host endosome</keyword>
<keyword id="KW-1040">Host Golgi apparatus</keyword>
<keyword id="KW-1043">Host membrane</keyword>
<keyword id="KW-0945">Host-virus interaction</keyword>
<keyword id="KW-0472">Membrane</keyword>
<keyword id="KW-0732">Signal</keyword>
<keyword id="KW-0812">Transmembrane</keyword>
<keyword id="KW-1133">Transmembrane helix</keyword>
<keyword id="KW-1161">Viral attachment to host cell</keyword>
<keyword id="KW-0261">Viral envelope protein</keyword>
<keyword id="KW-0946">Virion</keyword>
<keyword id="KW-1160">Virus entry into host cell</keyword>
<name>GB_RHCM6</name>
<reference key="1">
    <citation type="journal article" date="1997" name="J. Gen. Virol.">
        <title>Identification of the gene coding for rhesus cytomegalovirus glycoprotein B and immunological analysis of the protein.</title>
        <authorList>
            <person name="Kropff B."/>
            <person name="Mach M."/>
        </authorList>
    </citation>
    <scope>NUCLEOTIDE SEQUENCE [GENOMIC DNA]</scope>
</reference>
<accession>P89053</accession>
<comment type="function">
    <text evidence="3">Envelope glycoprotein that forms spikes at the surface of virion envelope. Essential for the initial attachment to heparan sulfate moieties of the host cell surface proteoglycans. Involved in fusion of viral and cellular membranes leading to virus entry into the host cell. Following initial binding to its host receptors, membrane fusion is mediated by the fusion machinery composed at least of gB and the heterodimer gH/gL. May be involved in the fusion between the virion envelope and the outer nuclear membrane during virion egress.</text>
</comment>
<comment type="subunit">
    <text evidence="3">Homotrimer; disulfide-linked. Binds to heparan sulfate proteoglycans. Interacts with gH/gL heterodimer.</text>
</comment>
<comment type="subcellular location">
    <subcellularLocation>
        <location evidence="3">Virion membrane</location>
        <topology evidence="3">Single-pass type I membrane protein</topology>
    </subcellularLocation>
    <subcellularLocation>
        <location evidence="3">Host cell membrane</location>
        <topology evidence="3">Single-pass type I membrane protein</topology>
    </subcellularLocation>
    <subcellularLocation>
        <location evidence="3">Host endosome membrane</location>
        <topology evidence="3">Single-pass type I membrane protein</topology>
    </subcellularLocation>
    <subcellularLocation>
        <location evidence="3">Host Golgi apparatus membrane</location>
        <topology evidence="3">Single-pass type I membrane protein</topology>
    </subcellularLocation>
    <text evidence="3">During virion morphogenesis, this protein probably accumulates in the endosomes and trans-Golgi where secondary envelopment occurs. It is probably transported to the cell surface from where it is endocytosed and directed to the trans-Golgi network (TGN).</text>
</comment>
<comment type="PTM">
    <text evidence="1">A proteolytic cleavage by host furin generates two subunits that remain linked by disulfide bonds.</text>
</comment>
<comment type="similarity">
    <text evidence="3">Belongs to the herpesviridae glycoprotein B family.</text>
</comment>
<organism>
    <name type="scientific">Rhesus cytomegalovirus (strain 68-1)</name>
    <name type="common">RhCMV</name>
    <dbReference type="NCBI Taxonomy" id="47929"/>
    <lineage>
        <taxon>Viruses</taxon>
        <taxon>Duplodnaviria</taxon>
        <taxon>Heunggongvirae</taxon>
        <taxon>Peploviricota</taxon>
        <taxon>Herviviricetes</taxon>
        <taxon>Herpesvirales</taxon>
        <taxon>Orthoherpesviridae</taxon>
        <taxon>Betaherpesvirinae</taxon>
        <taxon>Cytomegalovirus</taxon>
        <taxon>Cytomegalovirus macacinebeta3</taxon>
    </lineage>
</organism>
<gene>
    <name evidence="3" type="primary">gB</name>
    <name type="ORF">UL55</name>
</gene>